<protein>
    <recommendedName>
        <fullName>Pyruvate kinase 1</fullName>
        <shortName>PK 1</shortName>
        <ecNumber>2.7.1.40</ecNumber>
    </recommendedName>
</protein>
<name>KPYK1_CANGA</name>
<organism>
    <name type="scientific">Candida glabrata (strain ATCC 2001 / BCRC 20586 / JCM 3761 / NBRC 0622 / NRRL Y-65 / CBS 138)</name>
    <name type="common">Yeast</name>
    <name type="synonym">Nakaseomyces glabratus</name>
    <dbReference type="NCBI Taxonomy" id="284593"/>
    <lineage>
        <taxon>Eukaryota</taxon>
        <taxon>Fungi</taxon>
        <taxon>Dikarya</taxon>
        <taxon>Ascomycota</taxon>
        <taxon>Saccharomycotina</taxon>
        <taxon>Saccharomycetes</taxon>
        <taxon>Saccharomycetales</taxon>
        <taxon>Saccharomycetaceae</taxon>
        <taxon>Nakaseomyces</taxon>
    </lineage>
</organism>
<dbReference type="EC" id="2.7.1.40"/>
<dbReference type="EMBL" id="CR380959">
    <property type="protein sequence ID" value="CAG62845.1"/>
    <property type="molecule type" value="Genomic_DNA"/>
</dbReference>
<dbReference type="RefSeq" id="XP_449865.1">
    <property type="nucleotide sequence ID" value="XM_449865.1"/>
</dbReference>
<dbReference type="SMR" id="Q6FIS9"/>
<dbReference type="FunCoup" id="Q6FIS9">
    <property type="interactions" value="1050"/>
</dbReference>
<dbReference type="STRING" id="284593.Q6FIS9"/>
<dbReference type="EnsemblFungi" id="CAGL0M12034g-T">
    <property type="protein sequence ID" value="CAGL0M12034g-T-p1"/>
    <property type="gene ID" value="CAGL0M12034g"/>
</dbReference>
<dbReference type="GeneID" id="2891415"/>
<dbReference type="KEGG" id="cgr:2891415"/>
<dbReference type="CGD" id="CAL0137479">
    <property type="gene designation" value="PYK1"/>
</dbReference>
<dbReference type="VEuPathDB" id="FungiDB:CAGL0M12034g"/>
<dbReference type="eggNOG" id="KOG2323">
    <property type="taxonomic scope" value="Eukaryota"/>
</dbReference>
<dbReference type="HOGENOM" id="CLU_015439_0_1_1"/>
<dbReference type="InParanoid" id="Q6FIS9"/>
<dbReference type="OMA" id="RVHHIGE"/>
<dbReference type="UniPathway" id="UPA00109">
    <property type="reaction ID" value="UER00188"/>
</dbReference>
<dbReference type="Proteomes" id="UP000002428">
    <property type="component" value="Chromosome M"/>
</dbReference>
<dbReference type="GO" id="GO:0009986">
    <property type="term" value="C:cell surface"/>
    <property type="evidence" value="ECO:0000314"/>
    <property type="project" value="CGD"/>
</dbReference>
<dbReference type="GO" id="GO:0005829">
    <property type="term" value="C:cytosol"/>
    <property type="evidence" value="ECO:0000314"/>
    <property type="project" value="CGD"/>
</dbReference>
<dbReference type="GO" id="GO:0005576">
    <property type="term" value="C:extracellular region"/>
    <property type="evidence" value="ECO:0000314"/>
    <property type="project" value="CGD"/>
</dbReference>
<dbReference type="GO" id="GO:0062040">
    <property type="term" value="C:fungal biofilm matrix"/>
    <property type="evidence" value="ECO:0000314"/>
    <property type="project" value="CGD"/>
</dbReference>
<dbReference type="GO" id="GO:0005524">
    <property type="term" value="F:ATP binding"/>
    <property type="evidence" value="ECO:0007669"/>
    <property type="project" value="UniProtKB-KW"/>
</dbReference>
<dbReference type="GO" id="GO:0016301">
    <property type="term" value="F:kinase activity"/>
    <property type="evidence" value="ECO:0007669"/>
    <property type="project" value="UniProtKB-KW"/>
</dbReference>
<dbReference type="GO" id="GO:0000287">
    <property type="term" value="F:magnesium ion binding"/>
    <property type="evidence" value="ECO:0007669"/>
    <property type="project" value="InterPro"/>
</dbReference>
<dbReference type="GO" id="GO:0030955">
    <property type="term" value="F:potassium ion binding"/>
    <property type="evidence" value="ECO:0007669"/>
    <property type="project" value="InterPro"/>
</dbReference>
<dbReference type="GO" id="GO:0004743">
    <property type="term" value="F:pyruvate kinase activity"/>
    <property type="evidence" value="ECO:0007669"/>
    <property type="project" value="UniProtKB-EC"/>
</dbReference>
<dbReference type="CDD" id="cd00288">
    <property type="entry name" value="Pyruvate_Kinase"/>
    <property type="match status" value="1"/>
</dbReference>
<dbReference type="FunFam" id="2.40.33.10:FF:000001">
    <property type="entry name" value="Pyruvate kinase"/>
    <property type="match status" value="1"/>
</dbReference>
<dbReference type="FunFam" id="3.20.20.60:FF:000025">
    <property type="entry name" value="Pyruvate kinase"/>
    <property type="match status" value="1"/>
</dbReference>
<dbReference type="FunFam" id="3.40.1380.20:FF:000001">
    <property type="entry name" value="Pyruvate kinase"/>
    <property type="match status" value="1"/>
</dbReference>
<dbReference type="Gene3D" id="3.20.20.60">
    <property type="entry name" value="Phosphoenolpyruvate-binding domains"/>
    <property type="match status" value="1"/>
</dbReference>
<dbReference type="Gene3D" id="2.40.33.10">
    <property type="entry name" value="PK beta-barrel domain-like"/>
    <property type="match status" value="1"/>
</dbReference>
<dbReference type="Gene3D" id="3.40.1380.20">
    <property type="entry name" value="Pyruvate kinase, C-terminal domain"/>
    <property type="match status" value="1"/>
</dbReference>
<dbReference type="InterPro" id="IPR001697">
    <property type="entry name" value="Pyr_Knase"/>
</dbReference>
<dbReference type="InterPro" id="IPR015813">
    <property type="entry name" value="Pyrv/PenolPyrv_kinase-like_dom"/>
</dbReference>
<dbReference type="InterPro" id="IPR040442">
    <property type="entry name" value="Pyrv_kinase-like_dom_sf"/>
</dbReference>
<dbReference type="InterPro" id="IPR011037">
    <property type="entry name" value="Pyrv_Knase-like_insert_dom_sf"/>
</dbReference>
<dbReference type="InterPro" id="IPR018209">
    <property type="entry name" value="Pyrv_Knase_AS"/>
</dbReference>
<dbReference type="InterPro" id="IPR015793">
    <property type="entry name" value="Pyrv_Knase_brl"/>
</dbReference>
<dbReference type="InterPro" id="IPR015795">
    <property type="entry name" value="Pyrv_Knase_C"/>
</dbReference>
<dbReference type="InterPro" id="IPR036918">
    <property type="entry name" value="Pyrv_Knase_C_sf"/>
</dbReference>
<dbReference type="InterPro" id="IPR015806">
    <property type="entry name" value="Pyrv_Knase_insert_dom_sf"/>
</dbReference>
<dbReference type="NCBIfam" id="NF004491">
    <property type="entry name" value="PRK05826.1"/>
    <property type="match status" value="1"/>
</dbReference>
<dbReference type="NCBIfam" id="NF004978">
    <property type="entry name" value="PRK06354.1"/>
    <property type="match status" value="1"/>
</dbReference>
<dbReference type="NCBIfam" id="TIGR01064">
    <property type="entry name" value="pyruv_kin"/>
    <property type="match status" value="1"/>
</dbReference>
<dbReference type="PANTHER" id="PTHR11817">
    <property type="entry name" value="PYRUVATE KINASE"/>
    <property type="match status" value="1"/>
</dbReference>
<dbReference type="Pfam" id="PF00224">
    <property type="entry name" value="PK"/>
    <property type="match status" value="1"/>
</dbReference>
<dbReference type="Pfam" id="PF02887">
    <property type="entry name" value="PK_C"/>
    <property type="match status" value="1"/>
</dbReference>
<dbReference type="PRINTS" id="PR01050">
    <property type="entry name" value="PYRUVTKNASE"/>
</dbReference>
<dbReference type="SUPFAM" id="SSF51621">
    <property type="entry name" value="Phosphoenolpyruvate/pyruvate domain"/>
    <property type="match status" value="1"/>
</dbReference>
<dbReference type="SUPFAM" id="SSF50800">
    <property type="entry name" value="PK beta-barrel domain-like"/>
    <property type="match status" value="1"/>
</dbReference>
<dbReference type="SUPFAM" id="SSF52935">
    <property type="entry name" value="PK C-terminal domain-like"/>
    <property type="match status" value="1"/>
</dbReference>
<dbReference type="PROSITE" id="PS00110">
    <property type="entry name" value="PYRUVATE_KINASE"/>
    <property type="match status" value="1"/>
</dbReference>
<feature type="chain" id="PRO_0000112110" description="Pyruvate kinase 1">
    <location>
        <begin position="1"/>
        <end position="501"/>
    </location>
</feature>
<feature type="binding site" evidence="1">
    <location>
        <position position="50"/>
    </location>
    <ligand>
        <name>substrate</name>
    </ligand>
</feature>
<feature type="binding site" evidence="2">
    <location>
        <begin position="52"/>
        <end position="55"/>
    </location>
    <ligand>
        <name>ATP</name>
        <dbReference type="ChEBI" id="CHEBI:30616"/>
    </ligand>
</feature>
<feature type="binding site" evidence="1">
    <location>
        <position position="52"/>
    </location>
    <ligand>
        <name>K(+)</name>
        <dbReference type="ChEBI" id="CHEBI:29103"/>
    </ligand>
</feature>
<feature type="binding site" evidence="1">
    <location>
        <position position="54"/>
    </location>
    <ligand>
        <name>K(+)</name>
        <dbReference type="ChEBI" id="CHEBI:29103"/>
    </ligand>
</feature>
<feature type="binding site" evidence="1">
    <location>
        <position position="85"/>
    </location>
    <ligand>
        <name>K(+)</name>
        <dbReference type="ChEBI" id="CHEBI:29103"/>
    </ligand>
</feature>
<feature type="binding site" evidence="1">
    <location>
        <position position="86"/>
    </location>
    <ligand>
        <name>K(+)</name>
        <dbReference type="ChEBI" id="CHEBI:29103"/>
    </ligand>
</feature>
<feature type="binding site" evidence="2">
    <location>
        <position position="92"/>
    </location>
    <ligand>
        <name>ATP</name>
        <dbReference type="ChEBI" id="CHEBI:30616"/>
    </ligand>
</feature>
<feature type="binding site" evidence="2">
    <location>
        <position position="178"/>
    </location>
    <ligand>
        <name>ATP</name>
        <dbReference type="ChEBI" id="CHEBI:30616"/>
    </ligand>
</feature>
<feature type="binding site" evidence="3">
    <location>
        <position position="243"/>
    </location>
    <ligand>
        <name>Mg(2+)</name>
        <dbReference type="ChEBI" id="CHEBI:18420"/>
    </ligand>
</feature>
<feature type="binding site" evidence="1">
    <location>
        <position position="266"/>
    </location>
    <ligand>
        <name>substrate</name>
    </ligand>
</feature>
<feature type="binding site" evidence="1">
    <location>
        <position position="267"/>
    </location>
    <ligand>
        <name>Mg(2+)</name>
        <dbReference type="ChEBI" id="CHEBI:18420"/>
    </ligand>
</feature>
<feature type="binding site" evidence="1">
    <location>
        <position position="267"/>
    </location>
    <ligand>
        <name>substrate</name>
    </ligand>
</feature>
<feature type="binding site" evidence="1">
    <location>
        <position position="299"/>
    </location>
    <ligand>
        <name>substrate</name>
    </ligand>
</feature>
<feature type="site" description="Transition state stabilizer" evidence="1">
    <location>
        <position position="241"/>
    </location>
</feature>
<evidence type="ECO:0000250" key="1"/>
<evidence type="ECO:0000250" key="2">
    <source>
        <dbReference type="UniProtKB" id="P14618"/>
    </source>
</evidence>
<evidence type="ECO:0000255" key="3"/>
<evidence type="ECO:0000305" key="4"/>
<reference key="1">
    <citation type="journal article" date="2004" name="Nature">
        <title>Genome evolution in yeasts.</title>
        <authorList>
            <person name="Dujon B."/>
            <person name="Sherman D."/>
            <person name="Fischer G."/>
            <person name="Durrens P."/>
            <person name="Casaregola S."/>
            <person name="Lafontaine I."/>
            <person name="de Montigny J."/>
            <person name="Marck C."/>
            <person name="Neuveglise C."/>
            <person name="Talla E."/>
            <person name="Goffard N."/>
            <person name="Frangeul L."/>
            <person name="Aigle M."/>
            <person name="Anthouard V."/>
            <person name="Babour A."/>
            <person name="Barbe V."/>
            <person name="Barnay S."/>
            <person name="Blanchin S."/>
            <person name="Beckerich J.-M."/>
            <person name="Beyne E."/>
            <person name="Bleykasten C."/>
            <person name="Boisrame A."/>
            <person name="Boyer J."/>
            <person name="Cattolico L."/>
            <person name="Confanioleri F."/>
            <person name="de Daruvar A."/>
            <person name="Despons L."/>
            <person name="Fabre E."/>
            <person name="Fairhead C."/>
            <person name="Ferry-Dumazet H."/>
            <person name="Groppi A."/>
            <person name="Hantraye F."/>
            <person name="Hennequin C."/>
            <person name="Jauniaux N."/>
            <person name="Joyet P."/>
            <person name="Kachouri R."/>
            <person name="Kerrest A."/>
            <person name="Koszul R."/>
            <person name="Lemaire M."/>
            <person name="Lesur I."/>
            <person name="Ma L."/>
            <person name="Muller H."/>
            <person name="Nicaud J.-M."/>
            <person name="Nikolski M."/>
            <person name="Oztas S."/>
            <person name="Ozier-Kalogeropoulos O."/>
            <person name="Pellenz S."/>
            <person name="Potier S."/>
            <person name="Richard G.-F."/>
            <person name="Straub M.-L."/>
            <person name="Suleau A."/>
            <person name="Swennen D."/>
            <person name="Tekaia F."/>
            <person name="Wesolowski-Louvel M."/>
            <person name="Westhof E."/>
            <person name="Wirth B."/>
            <person name="Zeniou-Meyer M."/>
            <person name="Zivanovic Y."/>
            <person name="Bolotin-Fukuhara M."/>
            <person name="Thierry A."/>
            <person name="Bouchier C."/>
            <person name="Caudron B."/>
            <person name="Scarpelli C."/>
            <person name="Gaillardin C."/>
            <person name="Weissenbach J."/>
            <person name="Wincker P."/>
            <person name="Souciet J.-L."/>
        </authorList>
    </citation>
    <scope>NUCLEOTIDE SEQUENCE [LARGE SCALE GENOMIC DNA]</scope>
    <source>
        <strain>ATCC 2001 / BCRC 20586 / JCM 3761 / NBRC 0622 / NRRL Y-65 / CBS 138</strain>
    </source>
</reference>
<comment type="catalytic activity">
    <reaction>
        <text>pyruvate + ATP = phosphoenolpyruvate + ADP + H(+)</text>
        <dbReference type="Rhea" id="RHEA:18157"/>
        <dbReference type="ChEBI" id="CHEBI:15361"/>
        <dbReference type="ChEBI" id="CHEBI:15378"/>
        <dbReference type="ChEBI" id="CHEBI:30616"/>
        <dbReference type="ChEBI" id="CHEBI:58702"/>
        <dbReference type="ChEBI" id="CHEBI:456216"/>
        <dbReference type="EC" id="2.7.1.40"/>
    </reaction>
</comment>
<comment type="cofactor">
    <cofactor>
        <name>Mg(2+)</name>
        <dbReference type="ChEBI" id="CHEBI:18420"/>
    </cofactor>
</comment>
<comment type="cofactor">
    <cofactor>
        <name>K(+)</name>
        <dbReference type="ChEBI" id="CHEBI:29103"/>
    </cofactor>
</comment>
<comment type="pathway">
    <text>Carbohydrate degradation; glycolysis; pyruvate from D-glyceraldehyde 3-phosphate: step 5/5.</text>
</comment>
<comment type="subunit">
    <text evidence="1">Homotetramer.</text>
</comment>
<comment type="similarity">
    <text evidence="4">Belongs to the pyruvate kinase family.</text>
</comment>
<accession>Q6FIS9</accession>
<sequence>MDSRLARLTTLQTSAGEELRRTSIIGTIGPKTNNPETLVALRKAGLNIVRMNFSHGSYEYHKSVIDNARKSEELYPGRPLAIALDTKGPEIRTGTTTNEVDYPIPPNHEMIFTTDDKYAKACDDKIMYLDYKNITKVISAGRIIYVDDGVLSFEVLQVVDDKTLKVKSLNAGKICSHKGVNLPGTDVDLPALSEKDKADLRFGVENGVHMIFASFIRTAQDVLTIREVLGEDGKDIKIVVKIENQQGVNNFDEILKVTDAVMVARGDLGIEIPAPEVLAVQKKLIAKSNLAGKPVICATQMLESMTYNPRPTRAEVSDVGNAVLDGADCVMLSGETAKGNYPINAVTTMAETALIAEQAIAYLPNYDDIRNCTPKPTSTTETVAASAVAAVFEQKAKAIIVLSTSGTTARLVSKYRPNCPIILVTRNARTARFSHLYRGVFPFVYEKESVSDWTEDVEARLNFGIEQAIEFGILKKGDTYVSIQGFKAGVGHSNTLQVSTA</sequence>
<keyword id="KW-0067">ATP-binding</keyword>
<keyword id="KW-0324">Glycolysis</keyword>
<keyword id="KW-0418">Kinase</keyword>
<keyword id="KW-0460">Magnesium</keyword>
<keyword id="KW-0479">Metal-binding</keyword>
<keyword id="KW-0547">Nucleotide-binding</keyword>
<keyword id="KW-0630">Potassium</keyword>
<keyword id="KW-0670">Pyruvate</keyword>
<keyword id="KW-1185">Reference proteome</keyword>
<keyword id="KW-0808">Transferase</keyword>
<gene>
    <name type="primary">PYK1</name>
    <name type="ordered locus">CAGL0M12034g</name>
</gene>
<proteinExistence type="inferred from homology"/>